<proteinExistence type="inferred from homology"/>
<comment type="subcellular location">
    <subcellularLocation>
        <location evidence="1">Cell membrane</location>
        <topology evidence="1">Lipid-anchor</topology>
    </subcellularLocation>
</comment>
<comment type="similarity">
    <text evidence="1">Belongs to the UPF0323 family.</text>
</comment>
<organism>
    <name type="scientific">Helicobacter pylori (strain ATCC 700392 / 26695)</name>
    <name type="common">Campylobacter pylori</name>
    <dbReference type="NCBI Taxonomy" id="85962"/>
    <lineage>
        <taxon>Bacteria</taxon>
        <taxon>Pseudomonadati</taxon>
        <taxon>Campylobacterota</taxon>
        <taxon>Epsilonproteobacteria</taxon>
        <taxon>Campylobacterales</taxon>
        <taxon>Helicobacteraceae</taxon>
        <taxon>Helicobacter</taxon>
    </lineage>
</organism>
<sequence>MKKPYRKISDYAIVGGLSALVMVSIVGCKSNADDKPKEQSSLSQSVQKGAFVILEEQKDKSYKVVEEYPSSRTHIIVRDLQGNERVLSNEEIQKLIKEEEAKIDNGTSKLVQPNNGGSNEGSGFGLGSAILGSAAGAILGSYIGNKLFNNPNYQQNAQRTYKSPQAYQRSQNSFSKSAPSASSMGGASKGQSGFFGSSRPTSSPAVSSGTRGFNS</sequence>
<protein>
    <recommendedName>
        <fullName evidence="1">UPF0323 lipoprotein HP_0232</fullName>
    </recommendedName>
</protein>
<evidence type="ECO:0000255" key="1">
    <source>
        <dbReference type="HAMAP-Rule" id="MF_01421"/>
    </source>
</evidence>
<evidence type="ECO:0000256" key="2">
    <source>
        <dbReference type="SAM" id="MobiDB-lite"/>
    </source>
</evidence>
<keyword id="KW-1003">Cell membrane</keyword>
<keyword id="KW-0449">Lipoprotein</keyword>
<keyword id="KW-0472">Membrane</keyword>
<keyword id="KW-0564">Palmitate</keyword>
<keyword id="KW-1185">Reference proteome</keyword>
<keyword id="KW-0732">Signal</keyword>
<feature type="signal peptide" evidence="1">
    <location>
        <begin position="1"/>
        <end position="27"/>
    </location>
</feature>
<feature type="chain" id="PRO_0000036327" description="UPF0323 lipoprotein HP_0232">
    <location>
        <begin position="28"/>
        <end position="215"/>
    </location>
</feature>
<feature type="region of interest" description="Disordered" evidence="2">
    <location>
        <begin position="158"/>
        <end position="215"/>
    </location>
</feature>
<feature type="compositionally biased region" description="Polar residues" evidence="2">
    <location>
        <begin position="158"/>
        <end position="169"/>
    </location>
</feature>
<feature type="compositionally biased region" description="Low complexity" evidence="2">
    <location>
        <begin position="170"/>
        <end position="208"/>
    </location>
</feature>
<feature type="lipid moiety-binding region" description="N-palmitoyl cysteine" evidence="1">
    <location>
        <position position="28"/>
    </location>
</feature>
<feature type="lipid moiety-binding region" description="S-diacylglycerol cysteine" evidence="1">
    <location>
        <position position="28"/>
    </location>
</feature>
<accession>O25018</accession>
<reference key="1">
    <citation type="journal article" date="1997" name="Nature">
        <title>The complete genome sequence of the gastric pathogen Helicobacter pylori.</title>
        <authorList>
            <person name="Tomb J.-F."/>
            <person name="White O."/>
            <person name="Kerlavage A.R."/>
            <person name="Clayton R.A."/>
            <person name="Sutton G.G."/>
            <person name="Fleischmann R.D."/>
            <person name="Ketchum K.A."/>
            <person name="Klenk H.-P."/>
            <person name="Gill S.R."/>
            <person name="Dougherty B.A."/>
            <person name="Nelson K.E."/>
            <person name="Quackenbush J."/>
            <person name="Zhou L."/>
            <person name="Kirkness E.F."/>
            <person name="Peterson S.N."/>
            <person name="Loftus B.J."/>
            <person name="Richardson D.L."/>
            <person name="Dodson R.J."/>
            <person name="Khalak H.G."/>
            <person name="Glodek A."/>
            <person name="McKenney K."/>
            <person name="FitzGerald L.M."/>
            <person name="Lee N."/>
            <person name="Adams M.D."/>
            <person name="Hickey E.K."/>
            <person name="Berg D.E."/>
            <person name="Gocayne J.D."/>
            <person name="Utterback T.R."/>
            <person name="Peterson J.D."/>
            <person name="Kelley J.M."/>
            <person name="Cotton M.D."/>
            <person name="Weidman J.F."/>
            <person name="Fujii C."/>
            <person name="Bowman C."/>
            <person name="Watthey L."/>
            <person name="Wallin E."/>
            <person name="Hayes W.S."/>
            <person name="Borodovsky M."/>
            <person name="Karp P.D."/>
            <person name="Smith H.O."/>
            <person name="Fraser C.M."/>
            <person name="Venter J.C."/>
        </authorList>
    </citation>
    <scope>NUCLEOTIDE SEQUENCE [LARGE SCALE GENOMIC DNA]</scope>
    <source>
        <strain>ATCC 700392 / 26695</strain>
    </source>
</reference>
<name>Y232_HELPY</name>
<gene>
    <name type="ordered locus">HP_0232</name>
</gene>
<dbReference type="EMBL" id="AE000511">
    <property type="protein sequence ID" value="AAD07300.1"/>
    <property type="molecule type" value="Genomic_DNA"/>
</dbReference>
<dbReference type="PIR" id="H64548">
    <property type="entry name" value="S70997"/>
</dbReference>
<dbReference type="RefSeq" id="NP_207030.1">
    <property type="nucleotide sequence ID" value="NC_000915.1"/>
</dbReference>
<dbReference type="RefSeq" id="WP_000743516.1">
    <property type="nucleotide sequence ID" value="NC_018939.1"/>
</dbReference>
<dbReference type="DIP" id="DIP-3157N"/>
<dbReference type="IntAct" id="O25018">
    <property type="interactions" value="18"/>
</dbReference>
<dbReference type="MINT" id="O25018"/>
<dbReference type="STRING" id="85962.HP_0232"/>
<dbReference type="PaxDb" id="85962-C694_01170"/>
<dbReference type="EnsemblBacteria" id="AAD07300">
    <property type="protein sequence ID" value="AAD07300"/>
    <property type="gene ID" value="HP_0232"/>
</dbReference>
<dbReference type="KEGG" id="heo:C694_01170"/>
<dbReference type="KEGG" id="hpy:HP_0232"/>
<dbReference type="PATRIC" id="fig|85962.47.peg.250"/>
<dbReference type="eggNOG" id="ENOG502ZIB8">
    <property type="taxonomic scope" value="Bacteria"/>
</dbReference>
<dbReference type="InParanoid" id="O25018"/>
<dbReference type="OrthoDB" id="5339730at2"/>
<dbReference type="Proteomes" id="UP000000429">
    <property type="component" value="Chromosome"/>
</dbReference>
<dbReference type="GO" id="GO:0005886">
    <property type="term" value="C:plasma membrane"/>
    <property type="evidence" value="ECO:0007669"/>
    <property type="project" value="UniProtKB-SubCell"/>
</dbReference>
<dbReference type="HAMAP" id="MF_01421">
    <property type="entry name" value="UPF0323"/>
    <property type="match status" value="1"/>
</dbReference>
<dbReference type="InterPro" id="IPR020913">
    <property type="entry name" value="UPF0323"/>
</dbReference>
<dbReference type="NCBIfam" id="NF003146">
    <property type="entry name" value="PRK04081.1"/>
    <property type="match status" value="1"/>
</dbReference>
<dbReference type="PROSITE" id="PS51257">
    <property type="entry name" value="PROKAR_LIPOPROTEIN"/>
    <property type="match status" value="1"/>
</dbReference>